<accession>Q1WUV3</accession>
<evidence type="ECO:0000255" key="1">
    <source>
        <dbReference type="HAMAP-Rule" id="MF_00693"/>
    </source>
</evidence>
<evidence type="ECO:0000256" key="2">
    <source>
        <dbReference type="SAM" id="MobiDB-lite"/>
    </source>
</evidence>
<feature type="chain" id="PRO_0000257076" description="Probable transcriptional regulatory protein LSL_0422">
    <location>
        <begin position="1"/>
        <end position="242"/>
    </location>
</feature>
<feature type="region of interest" description="Disordered" evidence="2">
    <location>
        <begin position="1"/>
        <end position="21"/>
    </location>
</feature>
<keyword id="KW-0963">Cytoplasm</keyword>
<keyword id="KW-0238">DNA-binding</keyword>
<keyword id="KW-1185">Reference proteome</keyword>
<keyword id="KW-0804">Transcription</keyword>
<keyword id="KW-0805">Transcription regulation</keyword>
<protein>
    <recommendedName>
        <fullName evidence="1">Probable transcriptional regulatory protein LSL_0422</fullName>
    </recommendedName>
</protein>
<sequence>MSGHSKWHNIQGRKNAQDAKRGKIFQKISREIYMVAKSGGPDPDGNPQLRLIMDKARAANMPKDNIKRAIDKATGTGGADYEEITYEGYGPAGVAILVHALTDNRNRTASAVRADFNRNGGNLGETGSVSFMFDRKGYIAIAREDLEVDEDQMFEDVIEAGGEDLQTSDEVFEIYTDPKAFADVRDELQKKYDLATAELTMVPQNTVPVPADKVEQLQRLIDRLEDEDDVSEVYTSADFPED</sequence>
<gene>
    <name type="ordered locus">LSL_0422</name>
</gene>
<comment type="subcellular location">
    <subcellularLocation>
        <location evidence="1">Cytoplasm</location>
    </subcellularLocation>
</comment>
<comment type="similarity">
    <text evidence="1">Belongs to the TACO1 family.</text>
</comment>
<organism>
    <name type="scientific">Ligilactobacillus salivarius (strain UCC118)</name>
    <name type="common">Lactobacillus salivarius</name>
    <dbReference type="NCBI Taxonomy" id="362948"/>
    <lineage>
        <taxon>Bacteria</taxon>
        <taxon>Bacillati</taxon>
        <taxon>Bacillota</taxon>
        <taxon>Bacilli</taxon>
        <taxon>Lactobacillales</taxon>
        <taxon>Lactobacillaceae</taxon>
        <taxon>Ligilactobacillus</taxon>
    </lineage>
</organism>
<proteinExistence type="inferred from homology"/>
<dbReference type="EMBL" id="CP000233">
    <property type="protein sequence ID" value="ABD99232.1"/>
    <property type="molecule type" value="Genomic_DNA"/>
</dbReference>
<dbReference type="RefSeq" id="WP_011475744.1">
    <property type="nucleotide sequence ID" value="NC_007929.1"/>
</dbReference>
<dbReference type="RefSeq" id="YP_535315.1">
    <property type="nucleotide sequence ID" value="NC_007929.1"/>
</dbReference>
<dbReference type="SMR" id="Q1WUV3"/>
<dbReference type="STRING" id="362948.LSL_0422"/>
<dbReference type="KEGG" id="lsl:LSL_0422"/>
<dbReference type="PATRIC" id="fig|362948.14.peg.499"/>
<dbReference type="HOGENOM" id="CLU_062974_3_0_9"/>
<dbReference type="OrthoDB" id="9781053at2"/>
<dbReference type="Proteomes" id="UP000006559">
    <property type="component" value="Chromosome"/>
</dbReference>
<dbReference type="GO" id="GO:0005829">
    <property type="term" value="C:cytosol"/>
    <property type="evidence" value="ECO:0007669"/>
    <property type="project" value="TreeGrafter"/>
</dbReference>
<dbReference type="GO" id="GO:0003677">
    <property type="term" value="F:DNA binding"/>
    <property type="evidence" value="ECO:0007669"/>
    <property type="project" value="UniProtKB-UniRule"/>
</dbReference>
<dbReference type="GO" id="GO:0006355">
    <property type="term" value="P:regulation of DNA-templated transcription"/>
    <property type="evidence" value="ECO:0007669"/>
    <property type="project" value="UniProtKB-UniRule"/>
</dbReference>
<dbReference type="FunFam" id="1.10.10.200:FF:000002">
    <property type="entry name" value="Probable transcriptional regulatory protein CLM62_37755"/>
    <property type="match status" value="1"/>
</dbReference>
<dbReference type="Gene3D" id="1.10.10.200">
    <property type="match status" value="1"/>
</dbReference>
<dbReference type="Gene3D" id="3.30.70.980">
    <property type="match status" value="2"/>
</dbReference>
<dbReference type="HAMAP" id="MF_00693">
    <property type="entry name" value="Transcrip_reg_TACO1"/>
    <property type="match status" value="1"/>
</dbReference>
<dbReference type="InterPro" id="IPR017856">
    <property type="entry name" value="Integrase-like_N"/>
</dbReference>
<dbReference type="InterPro" id="IPR048300">
    <property type="entry name" value="TACO1_YebC-like_2nd/3rd_dom"/>
</dbReference>
<dbReference type="InterPro" id="IPR049083">
    <property type="entry name" value="TACO1_YebC_N"/>
</dbReference>
<dbReference type="InterPro" id="IPR002876">
    <property type="entry name" value="Transcrip_reg_TACO1-like"/>
</dbReference>
<dbReference type="InterPro" id="IPR026564">
    <property type="entry name" value="Transcrip_reg_TACO1-like_dom3"/>
</dbReference>
<dbReference type="InterPro" id="IPR029072">
    <property type="entry name" value="YebC-like"/>
</dbReference>
<dbReference type="NCBIfam" id="NF001030">
    <property type="entry name" value="PRK00110.1"/>
    <property type="match status" value="1"/>
</dbReference>
<dbReference type="NCBIfam" id="NF009044">
    <property type="entry name" value="PRK12378.1"/>
    <property type="match status" value="1"/>
</dbReference>
<dbReference type="NCBIfam" id="TIGR01033">
    <property type="entry name" value="YebC/PmpR family DNA-binding transcriptional regulator"/>
    <property type="match status" value="1"/>
</dbReference>
<dbReference type="PANTHER" id="PTHR12532:SF6">
    <property type="entry name" value="TRANSCRIPTIONAL REGULATORY PROTEIN YEBC-RELATED"/>
    <property type="match status" value="1"/>
</dbReference>
<dbReference type="PANTHER" id="PTHR12532">
    <property type="entry name" value="TRANSLATIONAL ACTIVATOR OF CYTOCHROME C OXIDASE 1"/>
    <property type="match status" value="1"/>
</dbReference>
<dbReference type="Pfam" id="PF20772">
    <property type="entry name" value="TACO1_YebC_N"/>
    <property type="match status" value="1"/>
</dbReference>
<dbReference type="Pfam" id="PF01709">
    <property type="entry name" value="Transcrip_reg"/>
    <property type="match status" value="1"/>
</dbReference>
<dbReference type="SUPFAM" id="SSF75625">
    <property type="entry name" value="YebC-like"/>
    <property type="match status" value="1"/>
</dbReference>
<reference key="1">
    <citation type="journal article" date="2006" name="Proc. Natl. Acad. Sci. U.S.A.">
        <title>Multireplicon genome architecture of Lactobacillus salivarius.</title>
        <authorList>
            <person name="Claesson M.J."/>
            <person name="Li Y."/>
            <person name="Leahy S."/>
            <person name="Canchaya C."/>
            <person name="van Pijkeren J.P."/>
            <person name="Cerdeno-Tarraga A.M."/>
            <person name="Parkhill J."/>
            <person name="Flynn S."/>
            <person name="O'Sullivan G.C."/>
            <person name="Collins J.K."/>
            <person name="Higgins D."/>
            <person name="Shanahan F."/>
            <person name="Fitzgerald G.F."/>
            <person name="van Sinderen D."/>
            <person name="O'Toole P.W."/>
        </authorList>
    </citation>
    <scope>NUCLEOTIDE SEQUENCE [LARGE SCALE GENOMIC DNA]</scope>
    <source>
        <strain>UCC118</strain>
    </source>
</reference>
<name>Y422_LIGS1</name>